<evidence type="ECO:0000250" key="1"/>
<evidence type="ECO:0000255" key="2">
    <source>
        <dbReference type="PROSITE-ProRule" id="PRU00533"/>
    </source>
</evidence>
<protein>
    <recommendedName>
        <fullName>Acyl-homoserine-lactone synthase</fullName>
        <ecNumber>2.3.1.184</ecNumber>
    </recommendedName>
    <alternativeName>
        <fullName>Autoinducer synthesis protein SolI</fullName>
    </alternativeName>
</protein>
<reference key="1">
    <citation type="journal article" date="2002" name="Nature">
        <title>Genome sequence of the plant pathogen Ralstonia solanacearum.</title>
        <authorList>
            <person name="Salanoubat M."/>
            <person name="Genin S."/>
            <person name="Artiguenave F."/>
            <person name="Gouzy J."/>
            <person name="Mangenot S."/>
            <person name="Arlat M."/>
            <person name="Billault A."/>
            <person name="Brottier P."/>
            <person name="Camus J.-C."/>
            <person name="Cattolico L."/>
            <person name="Chandler M."/>
            <person name="Choisne N."/>
            <person name="Claudel-Renard C."/>
            <person name="Cunnac S."/>
            <person name="Demange N."/>
            <person name="Gaspin C."/>
            <person name="Lavie M."/>
            <person name="Moisan A."/>
            <person name="Robert C."/>
            <person name="Saurin W."/>
            <person name="Schiex T."/>
            <person name="Siguier P."/>
            <person name="Thebault P."/>
            <person name="Whalen M."/>
            <person name="Wincker P."/>
            <person name="Levy M."/>
            <person name="Weissenbach J."/>
            <person name="Boucher C.A."/>
        </authorList>
    </citation>
    <scope>NUCLEOTIDE SEQUENCE [LARGE SCALE GENOMIC DNA]</scope>
    <source>
        <strain>ATCC BAA-1114 / GMI1000</strain>
    </source>
</reference>
<name>SOLI_RALN1</name>
<accession>P58584</accession>
<keyword id="KW-0071">Autoinducer synthesis</keyword>
<keyword id="KW-0673">Quorum sensing</keyword>
<keyword id="KW-1185">Reference proteome</keyword>
<keyword id="KW-0949">S-adenosyl-L-methionine</keyword>
<keyword id="KW-0808">Transferase</keyword>
<organism>
    <name type="scientific">Ralstonia nicotianae (strain ATCC BAA-1114 / GMI1000)</name>
    <name type="common">Ralstonia solanacearum</name>
    <dbReference type="NCBI Taxonomy" id="267608"/>
    <lineage>
        <taxon>Bacteria</taxon>
        <taxon>Pseudomonadati</taxon>
        <taxon>Pseudomonadota</taxon>
        <taxon>Betaproteobacteria</taxon>
        <taxon>Burkholderiales</taxon>
        <taxon>Burkholderiaceae</taxon>
        <taxon>Ralstonia</taxon>
        <taxon>Ralstonia solanacearum species complex</taxon>
    </lineage>
</organism>
<dbReference type="EC" id="2.3.1.184"/>
<dbReference type="EMBL" id="AL646052">
    <property type="protein sequence ID" value="CAD17074.1"/>
    <property type="molecule type" value="Genomic_DNA"/>
</dbReference>
<dbReference type="RefSeq" id="WP_011003171.1">
    <property type="nucleotide sequence ID" value="NC_003295.1"/>
</dbReference>
<dbReference type="SMR" id="P58584"/>
<dbReference type="STRING" id="267608.RSc3286"/>
<dbReference type="EnsemblBacteria" id="CAD17074">
    <property type="protein sequence ID" value="CAD17074"/>
    <property type="gene ID" value="RSc3286"/>
</dbReference>
<dbReference type="KEGG" id="rso:RSc3286"/>
<dbReference type="PATRIC" id="fig|267608.8.peg.3335"/>
<dbReference type="eggNOG" id="COG3916">
    <property type="taxonomic scope" value="Bacteria"/>
</dbReference>
<dbReference type="HOGENOM" id="CLU_085711_2_0_4"/>
<dbReference type="Proteomes" id="UP000001436">
    <property type="component" value="Chromosome"/>
</dbReference>
<dbReference type="GO" id="GO:0061579">
    <property type="term" value="F:N-acyl homoserine lactone synthase activity"/>
    <property type="evidence" value="ECO:0007669"/>
    <property type="project" value="UniProtKB-EC"/>
</dbReference>
<dbReference type="GO" id="GO:0009372">
    <property type="term" value="P:quorum sensing"/>
    <property type="evidence" value="ECO:0007669"/>
    <property type="project" value="UniProtKB-KW"/>
</dbReference>
<dbReference type="GO" id="GO:0007165">
    <property type="term" value="P:signal transduction"/>
    <property type="evidence" value="ECO:0007669"/>
    <property type="project" value="TreeGrafter"/>
</dbReference>
<dbReference type="Gene3D" id="3.40.630.30">
    <property type="match status" value="1"/>
</dbReference>
<dbReference type="InterPro" id="IPR016181">
    <property type="entry name" value="Acyl_CoA_acyltransferase"/>
</dbReference>
<dbReference type="InterPro" id="IPR018311">
    <property type="entry name" value="Autoind_synth_CS"/>
</dbReference>
<dbReference type="InterPro" id="IPR001690">
    <property type="entry name" value="Autoind_synthase"/>
</dbReference>
<dbReference type="PANTHER" id="PTHR39322">
    <property type="entry name" value="ACYL-HOMOSERINE-LACTONE SYNTHASE"/>
    <property type="match status" value="1"/>
</dbReference>
<dbReference type="PANTHER" id="PTHR39322:SF1">
    <property type="entry name" value="ISOVALERYL-HOMOSERINE LACTONE SYNTHASE"/>
    <property type="match status" value="1"/>
</dbReference>
<dbReference type="Pfam" id="PF00765">
    <property type="entry name" value="Autoind_synth"/>
    <property type="match status" value="1"/>
</dbReference>
<dbReference type="PRINTS" id="PR01549">
    <property type="entry name" value="AUTOINDCRSYN"/>
</dbReference>
<dbReference type="SUPFAM" id="SSF55729">
    <property type="entry name" value="Acyl-CoA N-acyltransferases (Nat)"/>
    <property type="match status" value="1"/>
</dbReference>
<dbReference type="PROSITE" id="PS00949">
    <property type="entry name" value="AUTOINDUCER_SYNTH_1"/>
    <property type="match status" value="1"/>
</dbReference>
<dbReference type="PROSITE" id="PS51187">
    <property type="entry name" value="AUTOINDUCER_SYNTH_2"/>
    <property type="match status" value="1"/>
</dbReference>
<proteinExistence type="inferred from homology"/>
<feature type="chain" id="PRO_0000210895" description="Acyl-homoserine-lactone synthase">
    <location>
        <begin position="1"/>
        <end position="204"/>
    </location>
</feature>
<sequence>MQTFIHGGGRLPEAVDAALAHYRHQIFVGQLGWQLPMADGRFERDQYDRDDTVYVVARDADGAICGCARLLPTTRPYLLKDVFAPLLMRGVPAPESPGVWELSRFAARSGASRARGARPDWAVRPMLASVVQCAAQRGARRLIGVTFVSMVRLFRRIGVRAHHAGPVRCIGGRPVVACWIDIDASTCAALGIPGASVVPGPALQ</sequence>
<gene>
    <name type="primary">solI</name>
    <name type="ordered locus">RSc3286</name>
    <name type="ORF">RS02515</name>
</gene>
<comment type="function">
    <text evidence="1">Required for the synthesis of acyl-HSL autoinducers that bind to SolR.</text>
</comment>
<comment type="catalytic activity">
    <reaction>
        <text>a fatty acyl-[ACP] + S-adenosyl-L-methionine = an N-acyl-L-homoserine lactone + S-methyl-5'-thioadenosine + holo-[ACP] + H(+)</text>
        <dbReference type="Rhea" id="RHEA:10096"/>
        <dbReference type="Rhea" id="RHEA-COMP:9685"/>
        <dbReference type="Rhea" id="RHEA-COMP:14125"/>
        <dbReference type="ChEBI" id="CHEBI:15378"/>
        <dbReference type="ChEBI" id="CHEBI:17509"/>
        <dbReference type="ChEBI" id="CHEBI:55474"/>
        <dbReference type="ChEBI" id="CHEBI:59789"/>
        <dbReference type="ChEBI" id="CHEBI:64479"/>
        <dbReference type="ChEBI" id="CHEBI:138651"/>
        <dbReference type="EC" id="2.3.1.184"/>
    </reaction>
</comment>
<comment type="similarity">
    <text evidence="2">Belongs to the autoinducer synthase family.</text>
</comment>